<keyword id="KW-0067">ATP-binding</keyword>
<keyword id="KW-0963">Cytoplasm</keyword>
<keyword id="KW-0418">Kinase</keyword>
<keyword id="KW-0547">Nucleotide-binding</keyword>
<keyword id="KW-1267">Proteomics identification</keyword>
<keyword id="KW-1185">Reference proteome</keyword>
<keyword id="KW-0723">Serine/threonine-protein kinase</keyword>
<keyword id="KW-0808">Transferase</keyword>
<proteinExistence type="evidence at protein level"/>
<dbReference type="EC" id="2.7.11.1"/>
<dbReference type="EMBL" id="AY874862">
    <property type="protein sequence ID" value="AAX59898.1"/>
    <property type="molecule type" value="mRNA"/>
</dbReference>
<dbReference type="CCDS" id="CCDS32416.1"/>
<dbReference type="RefSeq" id="NP_001019572.1">
    <property type="nucleotide sequence ID" value="NM_001024401.3"/>
</dbReference>
<dbReference type="SMR" id="Q52WX2"/>
<dbReference type="BioGRID" id="132609">
    <property type="interactions" value="35"/>
</dbReference>
<dbReference type="FunCoup" id="Q52WX2">
    <property type="interactions" value="632"/>
</dbReference>
<dbReference type="IntAct" id="Q52WX2">
    <property type="interactions" value="3"/>
</dbReference>
<dbReference type="STRING" id="9606.ENSP00000343248"/>
<dbReference type="BindingDB" id="Q52WX2"/>
<dbReference type="ChEMBL" id="CHEMBL1163129"/>
<dbReference type="DrugBank" id="DB12010">
    <property type="generic name" value="Fostamatinib"/>
</dbReference>
<dbReference type="DrugCentral" id="Q52WX2"/>
<dbReference type="GlyGen" id="Q52WX2">
    <property type="glycosylation" value="1 site, 1 O-linked glycan (1 site)"/>
</dbReference>
<dbReference type="iPTMnet" id="Q52WX2"/>
<dbReference type="PhosphoSitePlus" id="Q52WX2"/>
<dbReference type="BioMuta" id="SBK1"/>
<dbReference type="DMDM" id="74762155"/>
<dbReference type="MassIVE" id="Q52WX2"/>
<dbReference type="PaxDb" id="9606-ENSP00000343248"/>
<dbReference type="PeptideAtlas" id="Q52WX2"/>
<dbReference type="ProteomicsDB" id="62433"/>
<dbReference type="Antibodypedia" id="55882">
    <property type="antibodies" value="21 antibodies from 12 providers"/>
</dbReference>
<dbReference type="DNASU" id="388228"/>
<dbReference type="Ensembl" id="ENST00000341901.5">
    <property type="protein sequence ID" value="ENSP00000343248.4"/>
    <property type="gene ID" value="ENSG00000188322.8"/>
</dbReference>
<dbReference type="GeneID" id="388228"/>
<dbReference type="KEGG" id="hsa:388228"/>
<dbReference type="MANE-Select" id="ENST00000341901.5">
    <property type="protein sequence ID" value="ENSP00000343248.4"/>
    <property type="RefSeq nucleotide sequence ID" value="NM_001024401.3"/>
    <property type="RefSeq protein sequence ID" value="NP_001019572.1"/>
</dbReference>
<dbReference type="UCSC" id="uc002dpd.3">
    <property type="organism name" value="human"/>
</dbReference>
<dbReference type="AGR" id="HGNC:17699"/>
<dbReference type="CTD" id="388228"/>
<dbReference type="DisGeNET" id="388228"/>
<dbReference type="GeneCards" id="SBK1"/>
<dbReference type="HGNC" id="HGNC:17699">
    <property type="gene designation" value="SBK1"/>
</dbReference>
<dbReference type="HPA" id="ENSG00000188322">
    <property type="expression patterns" value="Group enriched (brain, skeletal muscle)"/>
</dbReference>
<dbReference type="MIM" id="620212">
    <property type="type" value="gene"/>
</dbReference>
<dbReference type="neXtProt" id="NX_Q52WX2"/>
<dbReference type="OpenTargets" id="ENSG00000188322"/>
<dbReference type="PharmGKB" id="PA134887617"/>
<dbReference type="VEuPathDB" id="HostDB:ENSG00000188322"/>
<dbReference type="eggNOG" id="KOG1345">
    <property type="taxonomic scope" value="Eukaryota"/>
</dbReference>
<dbReference type="GeneTree" id="ENSGT00940000154852"/>
<dbReference type="HOGENOM" id="CLU_000288_10_1_1"/>
<dbReference type="InParanoid" id="Q52WX2"/>
<dbReference type="OMA" id="IFCFIKY"/>
<dbReference type="OrthoDB" id="6513151at2759"/>
<dbReference type="PAN-GO" id="Q52WX2">
    <property type="GO annotations" value="3 GO annotations based on evolutionary models"/>
</dbReference>
<dbReference type="PhylomeDB" id="Q52WX2"/>
<dbReference type="TreeFam" id="TF326736"/>
<dbReference type="PathwayCommons" id="Q52WX2"/>
<dbReference type="SignaLink" id="Q52WX2"/>
<dbReference type="BioGRID-ORCS" id="388228">
    <property type="hits" value="14 hits in 1188 CRISPR screens"/>
</dbReference>
<dbReference type="ChiTaRS" id="SBK1">
    <property type="organism name" value="human"/>
</dbReference>
<dbReference type="GenomeRNAi" id="388228"/>
<dbReference type="Pharos" id="Q52WX2">
    <property type="development level" value="Tchem"/>
</dbReference>
<dbReference type="PRO" id="PR:Q52WX2"/>
<dbReference type="Proteomes" id="UP000005640">
    <property type="component" value="Chromosome 16"/>
</dbReference>
<dbReference type="RNAct" id="Q52WX2">
    <property type="molecule type" value="protein"/>
</dbReference>
<dbReference type="Bgee" id="ENSG00000188322">
    <property type="expression patterns" value="Expressed in cortical plate and 153 other cell types or tissues"/>
</dbReference>
<dbReference type="ExpressionAtlas" id="Q52WX2">
    <property type="expression patterns" value="baseline and differential"/>
</dbReference>
<dbReference type="GO" id="GO:0005737">
    <property type="term" value="C:cytoplasm"/>
    <property type="evidence" value="ECO:0007669"/>
    <property type="project" value="UniProtKB-SubCell"/>
</dbReference>
<dbReference type="GO" id="GO:0005524">
    <property type="term" value="F:ATP binding"/>
    <property type="evidence" value="ECO:0007669"/>
    <property type="project" value="UniProtKB-KW"/>
</dbReference>
<dbReference type="GO" id="GO:0106310">
    <property type="term" value="F:protein serine kinase activity"/>
    <property type="evidence" value="ECO:0007669"/>
    <property type="project" value="RHEA"/>
</dbReference>
<dbReference type="GO" id="GO:0004674">
    <property type="term" value="F:protein serine/threonine kinase activity"/>
    <property type="evidence" value="ECO:0000318"/>
    <property type="project" value="GO_Central"/>
</dbReference>
<dbReference type="CDD" id="cd13987">
    <property type="entry name" value="STKc_SBK1"/>
    <property type="match status" value="1"/>
</dbReference>
<dbReference type="FunFam" id="1.10.510.10:FF:000337">
    <property type="entry name" value="Serine/threonine-protein kinase SBK1"/>
    <property type="match status" value="1"/>
</dbReference>
<dbReference type="Gene3D" id="1.10.510.10">
    <property type="entry name" value="Transferase(Phosphotransferase) domain 1"/>
    <property type="match status" value="1"/>
</dbReference>
<dbReference type="InterPro" id="IPR011009">
    <property type="entry name" value="Kinase-like_dom_sf"/>
</dbReference>
<dbReference type="InterPro" id="IPR000719">
    <property type="entry name" value="Prot_kinase_dom"/>
</dbReference>
<dbReference type="InterPro" id="IPR008271">
    <property type="entry name" value="Ser/Thr_kinase_AS"/>
</dbReference>
<dbReference type="InterPro" id="IPR016234">
    <property type="entry name" value="Ser/Thr_kinase_Sbk1"/>
</dbReference>
<dbReference type="PANTHER" id="PTHR24359">
    <property type="entry name" value="SERINE/THREONINE-PROTEIN KINASE SBK1"/>
    <property type="match status" value="1"/>
</dbReference>
<dbReference type="PANTHER" id="PTHR24359:SF0">
    <property type="entry name" value="SERINE_THREONINE-PROTEIN KINASE SBK1"/>
    <property type="match status" value="1"/>
</dbReference>
<dbReference type="Pfam" id="PF00069">
    <property type="entry name" value="Pkinase"/>
    <property type="match status" value="1"/>
</dbReference>
<dbReference type="PIRSF" id="PIRSF000566">
    <property type="entry name" value="Ser/Thr_PK_Sbk1"/>
    <property type="match status" value="1"/>
</dbReference>
<dbReference type="SMART" id="SM00220">
    <property type="entry name" value="S_TKc"/>
    <property type="match status" value="1"/>
</dbReference>
<dbReference type="SUPFAM" id="SSF56112">
    <property type="entry name" value="Protein kinase-like (PK-like)"/>
    <property type="match status" value="1"/>
</dbReference>
<dbReference type="PROSITE" id="PS50011">
    <property type="entry name" value="PROTEIN_KINASE_DOM"/>
    <property type="match status" value="1"/>
</dbReference>
<dbReference type="PROSITE" id="PS00108">
    <property type="entry name" value="PROTEIN_KINASE_ST"/>
    <property type="match status" value="1"/>
</dbReference>
<protein>
    <recommendedName>
        <fullName>Serine/threonine-protein kinase SBK1</fullName>
        <ecNumber>2.7.11.1</ecNumber>
    </recommendedName>
    <alternativeName>
        <fullName>SH3 domain-binding kinase 1</fullName>
    </alternativeName>
</protein>
<gene>
    <name type="primary">SBK1</name>
</gene>
<comment type="function">
    <text evidence="1">May be involved in signal-transduction pathways related to the control of brain development.</text>
</comment>
<comment type="catalytic activity">
    <reaction>
        <text>L-seryl-[protein] + ATP = O-phospho-L-seryl-[protein] + ADP + H(+)</text>
        <dbReference type="Rhea" id="RHEA:17989"/>
        <dbReference type="Rhea" id="RHEA-COMP:9863"/>
        <dbReference type="Rhea" id="RHEA-COMP:11604"/>
        <dbReference type="ChEBI" id="CHEBI:15378"/>
        <dbReference type="ChEBI" id="CHEBI:29999"/>
        <dbReference type="ChEBI" id="CHEBI:30616"/>
        <dbReference type="ChEBI" id="CHEBI:83421"/>
        <dbReference type="ChEBI" id="CHEBI:456216"/>
        <dbReference type="EC" id="2.7.11.1"/>
    </reaction>
</comment>
<comment type="catalytic activity">
    <reaction>
        <text>L-threonyl-[protein] + ATP = O-phospho-L-threonyl-[protein] + ADP + H(+)</text>
        <dbReference type="Rhea" id="RHEA:46608"/>
        <dbReference type="Rhea" id="RHEA-COMP:11060"/>
        <dbReference type="Rhea" id="RHEA-COMP:11605"/>
        <dbReference type="ChEBI" id="CHEBI:15378"/>
        <dbReference type="ChEBI" id="CHEBI:30013"/>
        <dbReference type="ChEBI" id="CHEBI:30616"/>
        <dbReference type="ChEBI" id="CHEBI:61977"/>
        <dbReference type="ChEBI" id="CHEBI:456216"/>
        <dbReference type="EC" id="2.7.11.1"/>
    </reaction>
</comment>
<comment type="subcellular location">
    <subcellularLocation>
        <location evidence="1">Cytoplasm</location>
    </subcellularLocation>
</comment>
<comment type="similarity">
    <text evidence="2">Belongs to the protein kinase superfamily. Ser/Thr protein kinase family.</text>
</comment>
<reference key="1">
    <citation type="journal article" date="2006" name="Zhongguo Sheng Wu Hua Xue Yu Fen Zi Sheng Wu Xue Bao">
        <title>Cloning of human SBK1 cDNA and screening of its interaction proteins.</title>
        <authorList>
            <person name="Wang P.Z."/>
            <person name="Wang X."/>
            <person name="Wang F."/>
            <person name="Wu J."/>
        </authorList>
    </citation>
    <scope>NUCLEOTIDE SEQUENCE [MRNA]</scope>
</reference>
<reference key="2">
    <citation type="journal article" date="2007" name="Nature">
        <title>Patterns of somatic mutation in human cancer genomes.</title>
        <authorList>
            <person name="Greenman C."/>
            <person name="Stephens P."/>
            <person name="Smith R."/>
            <person name="Dalgliesh G.L."/>
            <person name="Hunter C."/>
            <person name="Bignell G."/>
            <person name="Davies H."/>
            <person name="Teague J."/>
            <person name="Butler A."/>
            <person name="Stevens C."/>
            <person name="Edkins S."/>
            <person name="O'Meara S."/>
            <person name="Vastrik I."/>
            <person name="Schmidt E.E."/>
            <person name="Avis T."/>
            <person name="Barthorpe S."/>
            <person name="Bhamra G."/>
            <person name="Buck G."/>
            <person name="Choudhury B."/>
            <person name="Clements J."/>
            <person name="Cole J."/>
            <person name="Dicks E."/>
            <person name="Forbes S."/>
            <person name="Gray K."/>
            <person name="Halliday K."/>
            <person name="Harrison R."/>
            <person name="Hills K."/>
            <person name="Hinton J."/>
            <person name="Jenkinson A."/>
            <person name="Jones D."/>
            <person name="Menzies A."/>
            <person name="Mironenko T."/>
            <person name="Perry J."/>
            <person name="Raine K."/>
            <person name="Richardson D."/>
            <person name="Shepherd R."/>
            <person name="Small A."/>
            <person name="Tofts C."/>
            <person name="Varian J."/>
            <person name="Webb T."/>
            <person name="West S."/>
            <person name="Widaa S."/>
            <person name="Yates A."/>
            <person name="Cahill D.P."/>
            <person name="Louis D.N."/>
            <person name="Goldstraw P."/>
            <person name="Nicholson A.G."/>
            <person name="Brasseur F."/>
            <person name="Looijenga L."/>
            <person name="Weber B.L."/>
            <person name="Chiew Y.-E."/>
            <person name="DeFazio A."/>
            <person name="Greaves M.F."/>
            <person name="Green A.R."/>
            <person name="Campbell P."/>
            <person name="Birney E."/>
            <person name="Easton D.F."/>
            <person name="Chenevix-Trench G."/>
            <person name="Tan M.-H."/>
            <person name="Khoo S.K."/>
            <person name="Teh B.T."/>
            <person name="Yuen S.T."/>
            <person name="Leung S.Y."/>
            <person name="Wooster R."/>
            <person name="Futreal P.A."/>
            <person name="Stratton M.R."/>
        </authorList>
    </citation>
    <scope>VARIANTS [LARGE SCALE ANALYSIS] GLU-92; THR-250 AND SER-261</scope>
</reference>
<organism>
    <name type="scientific">Homo sapiens</name>
    <name type="common">Human</name>
    <dbReference type="NCBI Taxonomy" id="9606"/>
    <lineage>
        <taxon>Eukaryota</taxon>
        <taxon>Metazoa</taxon>
        <taxon>Chordata</taxon>
        <taxon>Craniata</taxon>
        <taxon>Vertebrata</taxon>
        <taxon>Euteleostomi</taxon>
        <taxon>Mammalia</taxon>
        <taxon>Eutheria</taxon>
        <taxon>Euarchontoglires</taxon>
        <taxon>Primates</taxon>
        <taxon>Haplorrhini</taxon>
        <taxon>Catarrhini</taxon>
        <taxon>Hominidae</taxon>
        <taxon>Homo</taxon>
    </lineage>
</organism>
<feature type="chain" id="PRO_0000238451" description="Serine/threonine-protein kinase SBK1">
    <location>
        <begin position="1"/>
        <end position="424"/>
    </location>
</feature>
<feature type="domain" description="Protein kinase" evidence="2">
    <location>
        <begin position="53"/>
        <end position="318"/>
    </location>
</feature>
<feature type="region of interest" description="Disordered" evidence="4">
    <location>
        <begin position="321"/>
        <end position="373"/>
    </location>
</feature>
<feature type="region of interest" description="Disordered" evidence="4">
    <location>
        <begin position="390"/>
        <end position="412"/>
    </location>
</feature>
<feature type="compositionally biased region" description="Pro residues" evidence="4">
    <location>
        <begin position="390"/>
        <end position="399"/>
    </location>
</feature>
<feature type="active site" description="Proton acceptor" evidence="2 3">
    <location>
        <position position="174"/>
    </location>
</feature>
<feature type="binding site" evidence="2">
    <location>
        <begin position="59"/>
        <end position="67"/>
    </location>
    <ligand>
        <name>ATP</name>
        <dbReference type="ChEBI" id="CHEBI:30616"/>
    </ligand>
</feature>
<feature type="binding site" evidence="2">
    <location>
        <position position="82"/>
    </location>
    <ligand>
        <name>ATP</name>
        <dbReference type="ChEBI" id="CHEBI:30616"/>
    </ligand>
</feature>
<feature type="sequence variant" id="VAR_051665" description="In dbSNP:rs35448675.">
    <original>R</original>
    <variation>H</variation>
    <location>
        <position position="12"/>
    </location>
</feature>
<feature type="sequence variant" id="VAR_041068" description="In an ovarian mucinous carcinoma sample; somatic mutation." evidence="5">
    <original>K</original>
    <variation>E</variation>
    <location>
        <position position="92"/>
    </location>
</feature>
<feature type="sequence variant" id="VAR_041069" description="In dbSNP:rs56072383." evidence="5">
    <original>N</original>
    <variation>T</variation>
    <location>
        <position position="250"/>
    </location>
</feature>
<feature type="sequence variant" id="VAR_041070" evidence="5">
    <original>A</original>
    <variation>S</variation>
    <location>
        <position position="261"/>
    </location>
</feature>
<accession>Q52WX2</accession>
<evidence type="ECO:0000250" key="1"/>
<evidence type="ECO:0000255" key="2">
    <source>
        <dbReference type="PROSITE-ProRule" id="PRU00159"/>
    </source>
</evidence>
<evidence type="ECO:0000255" key="3">
    <source>
        <dbReference type="PROSITE-ProRule" id="PRU10027"/>
    </source>
</evidence>
<evidence type="ECO:0000256" key="4">
    <source>
        <dbReference type="SAM" id="MobiDB-lite"/>
    </source>
</evidence>
<evidence type="ECO:0000269" key="5">
    <source>
    </source>
</evidence>
<name>SBK1_HUMAN</name>
<sequence length="424" mass="46252">MSVGCPEPEPPRSLTCCGPGTAPGPGAGVPLLTEDMQALTLRTLAASDVTKHYELVRELGKGTYGKVDLVVYKGTGTKMALKFVNKSKTKLKNFLREVSITNSLSSSPFIIKVFDVVFETEDCYVFAQEYAPAGDLFDIIPPQVGLPEDTVKRCVQQLGLALDFMHGRQLVHRDIKPENVLLFDRECRRVKLADFGMTRRVGCRVKRVSGTIPYTAPEVCQAGRADGLAVDTGVDVWAFGVLIFCVLTGNFPWEAASGADAFFEEFVRWQRGRLPGLPSQWRRFTEPALRMFQRLLALEPERRGPAKEVFRFLKHELTSELRRRPSHRARKPPGDRPPAAGPLRLEAPGPLKRTVLTESGSGSRPAPPAVGSVPLPVPVPVPVPVPVPVPEPGLAPQGPPGRTDGRADKSKGQVVLATAIEICV</sequence>